<protein>
    <recommendedName>
        <fullName>Secretoglobin family 1C member 1</fullName>
    </recommendedName>
    <alternativeName>
        <fullName>Secretoglobin RYD5</fullName>
    </alternativeName>
</protein>
<proteinExistence type="evidence at transcript level"/>
<reference key="1">
    <citation type="journal article" date="1991" name="EMBO J.">
        <title>Novel genes for potential ligand-binding proteins in subregions of the olfactory mucosa.</title>
        <authorList>
            <person name="Dear T.N."/>
            <person name="Boehm T."/>
            <person name="Keverne E.B."/>
            <person name="Rabbitts T.H."/>
        </authorList>
    </citation>
    <scope>NUCLEOTIDE SEQUENCE [MRNA]</scope>
    <scope>TISSUE SPECIFICITY</scope>
    <source>
        <strain>Fischer</strain>
        <tissue>Olfactory epithelium</tissue>
    </source>
</reference>
<dbReference type="EMBL" id="X60661">
    <property type="protein sequence ID" value="CAA43068.1"/>
    <property type="molecule type" value="mRNA"/>
</dbReference>
<dbReference type="SMR" id="Q05702"/>
<dbReference type="FunCoup" id="Q05702">
    <property type="interactions" value="2"/>
</dbReference>
<dbReference type="STRING" id="10116.ENSRNOP00000017137"/>
<dbReference type="PhosphoSitePlus" id="Q05702"/>
<dbReference type="PaxDb" id="10116-ENSRNOP00000017137"/>
<dbReference type="UCSC" id="RGD:1561432">
    <property type="organism name" value="rat"/>
</dbReference>
<dbReference type="AGR" id="RGD:1561432"/>
<dbReference type="RGD" id="1561432">
    <property type="gene designation" value="Scgb1c1"/>
</dbReference>
<dbReference type="eggNOG" id="ENOG502SDMQ">
    <property type="taxonomic scope" value="Eukaryota"/>
</dbReference>
<dbReference type="InParanoid" id="Q05702"/>
<dbReference type="OrthoDB" id="9069344at2759"/>
<dbReference type="PhylomeDB" id="Q05702"/>
<dbReference type="PRO" id="PR:Q05702"/>
<dbReference type="Proteomes" id="UP000002494">
    <property type="component" value="Unplaced"/>
</dbReference>
<dbReference type="GO" id="GO:0005576">
    <property type="term" value="C:extracellular region"/>
    <property type="evidence" value="ECO:0007669"/>
    <property type="project" value="UniProtKB-SubCell"/>
</dbReference>
<dbReference type="CDD" id="cd00633">
    <property type="entry name" value="Secretoglobin"/>
    <property type="match status" value="1"/>
</dbReference>
<dbReference type="Gene3D" id="1.10.210.10">
    <property type="entry name" value="Secretoglobin"/>
    <property type="match status" value="1"/>
</dbReference>
<dbReference type="InterPro" id="IPR016126">
    <property type="entry name" value="Secretoglobin"/>
</dbReference>
<dbReference type="InterPro" id="IPR043215">
    <property type="entry name" value="Secretoglobin_1C-like"/>
</dbReference>
<dbReference type="InterPro" id="IPR035960">
    <property type="entry name" value="Secretoglobin_sf"/>
</dbReference>
<dbReference type="PANTHER" id="PTHR10136">
    <property type="entry name" value="SECRETOGLOBIN FAMILY 1 MEMBER"/>
    <property type="match status" value="1"/>
</dbReference>
<dbReference type="PANTHER" id="PTHR10136:SF8">
    <property type="entry name" value="SECRETOGLOBIN FAMILY 1C MEMBER 1-RELATED"/>
    <property type="match status" value="1"/>
</dbReference>
<dbReference type="Pfam" id="PF01099">
    <property type="entry name" value="Uteroglobin"/>
    <property type="match status" value="1"/>
</dbReference>
<dbReference type="SUPFAM" id="SSF48201">
    <property type="entry name" value="Uteroglobin-like"/>
    <property type="match status" value="1"/>
</dbReference>
<dbReference type="PROSITE" id="PS51311">
    <property type="entry name" value="SCGB"/>
    <property type="match status" value="1"/>
</dbReference>
<name>SG1C1_RAT</name>
<comment type="subcellular location">
    <subcellularLocation>
        <location evidence="1">Secreted</location>
    </subcellularLocation>
</comment>
<comment type="tissue specificity">
    <text evidence="3">Expressed in the olfactory mucosa.</text>
</comment>
<comment type="similarity">
    <text evidence="4">Belongs to the secretoglobin family.</text>
</comment>
<feature type="signal peptide" evidence="2">
    <location>
        <begin position="1"/>
        <end position="22"/>
    </location>
</feature>
<feature type="chain" id="PRO_0000223337" description="Secretoglobin family 1C member 1">
    <location>
        <begin position="23"/>
        <end position="94"/>
    </location>
</feature>
<sequence length="94" mass="10401">MKGSSALLVALTVLCICGLTRAEDDNEFFMEFLQTLLVGTPEELYEGPLGKYNVNDMAKAALTELKSCIDELQPVHKEQLVKLLVQVLDAQEDT</sequence>
<organism>
    <name type="scientific">Rattus norvegicus</name>
    <name type="common">Rat</name>
    <dbReference type="NCBI Taxonomy" id="10116"/>
    <lineage>
        <taxon>Eukaryota</taxon>
        <taxon>Metazoa</taxon>
        <taxon>Chordata</taxon>
        <taxon>Craniata</taxon>
        <taxon>Vertebrata</taxon>
        <taxon>Euteleostomi</taxon>
        <taxon>Mammalia</taxon>
        <taxon>Eutheria</taxon>
        <taxon>Euarchontoglires</taxon>
        <taxon>Glires</taxon>
        <taxon>Rodentia</taxon>
        <taxon>Myomorpha</taxon>
        <taxon>Muroidea</taxon>
        <taxon>Muridae</taxon>
        <taxon>Murinae</taxon>
        <taxon>Rattus</taxon>
    </lineage>
</organism>
<keyword id="KW-1185">Reference proteome</keyword>
<keyword id="KW-0964">Secreted</keyword>
<keyword id="KW-0732">Signal</keyword>
<evidence type="ECO:0000250" key="1"/>
<evidence type="ECO:0000255" key="2"/>
<evidence type="ECO:0000269" key="3">
    <source>
    </source>
</evidence>
<evidence type="ECO:0000305" key="4"/>
<gene>
    <name type="primary">Scgb1c1</name>
    <name type="synonym">Ryd5</name>
</gene>
<accession>Q05702</accession>